<reference key="1">
    <citation type="submission" date="2005-10" db="EMBL/GenBank/DDBJ databases">
        <title>Complete sequence of Pelobacter carbinolicus DSM 2380.</title>
        <authorList>
            <person name="Copeland A."/>
            <person name="Lucas S."/>
            <person name="Lapidus A."/>
            <person name="Barry K."/>
            <person name="Detter J.C."/>
            <person name="Glavina T."/>
            <person name="Hammon N."/>
            <person name="Israni S."/>
            <person name="Pitluck S."/>
            <person name="Chertkov O."/>
            <person name="Schmutz J."/>
            <person name="Larimer F."/>
            <person name="Land M."/>
            <person name="Kyrpides N."/>
            <person name="Ivanova N."/>
            <person name="Richardson P."/>
        </authorList>
    </citation>
    <scope>NUCLEOTIDE SEQUENCE [LARGE SCALE GENOMIC DNA]</scope>
    <source>
        <strain>DSM 2380 / NBRC 103641 / GraBd1</strain>
    </source>
</reference>
<protein>
    <recommendedName>
        <fullName evidence="1">Phosphomethylpyrimidine synthase 2</fullName>
        <ecNumber evidence="1">4.1.99.17</ecNumber>
    </recommendedName>
    <alternativeName>
        <fullName evidence="1">Hydroxymethylpyrimidine phosphate synthase 2</fullName>
        <shortName evidence="1">HMP-P synthase 2</shortName>
        <shortName evidence="1">HMP-phosphate synthase 2</shortName>
        <shortName evidence="1">HMPP synthase 2</shortName>
    </alternativeName>
    <alternativeName>
        <fullName evidence="1">Thiamine biosynthesis protein ThiC 2</fullName>
    </alternativeName>
</protein>
<comment type="function">
    <text evidence="1">Catalyzes the synthesis of the hydroxymethylpyrimidine phosphate (HMP-P) moiety of thiamine from aminoimidazole ribotide (AIR) in a radical S-adenosyl-L-methionine (SAM)-dependent reaction.</text>
</comment>
<comment type="catalytic activity">
    <reaction evidence="1">
        <text>5-amino-1-(5-phospho-beta-D-ribosyl)imidazole + S-adenosyl-L-methionine = 4-amino-2-methyl-5-(phosphooxymethyl)pyrimidine + CO + 5'-deoxyadenosine + formate + L-methionine + 3 H(+)</text>
        <dbReference type="Rhea" id="RHEA:24840"/>
        <dbReference type="ChEBI" id="CHEBI:15378"/>
        <dbReference type="ChEBI" id="CHEBI:15740"/>
        <dbReference type="ChEBI" id="CHEBI:17245"/>
        <dbReference type="ChEBI" id="CHEBI:17319"/>
        <dbReference type="ChEBI" id="CHEBI:57844"/>
        <dbReference type="ChEBI" id="CHEBI:58354"/>
        <dbReference type="ChEBI" id="CHEBI:59789"/>
        <dbReference type="ChEBI" id="CHEBI:137981"/>
        <dbReference type="EC" id="4.1.99.17"/>
    </reaction>
</comment>
<comment type="cofactor">
    <cofactor evidence="1">
        <name>[4Fe-4S] cluster</name>
        <dbReference type="ChEBI" id="CHEBI:49883"/>
    </cofactor>
    <text evidence="1">Binds 1 [4Fe-4S] cluster per subunit. The cluster is coordinated with 3 cysteines and an exchangeable S-adenosyl-L-methionine.</text>
</comment>
<comment type="pathway">
    <text evidence="1">Cofactor biosynthesis; thiamine diphosphate biosynthesis.</text>
</comment>
<comment type="subunit">
    <text evidence="1">Homodimer.</text>
</comment>
<comment type="similarity">
    <text evidence="1">Belongs to the ThiC family.</text>
</comment>
<proteinExistence type="inferred from homology"/>
<name>THIC2_SYNC1</name>
<evidence type="ECO:0000255" key="1">
    <source>
        <dbReference type="HAMAP-Rule" id="MF_00089"/>
    </source>
</evidence>
<dbReference type="EC" id="4.1.99.17" evidence="1"/>
<dbReference type="EMBL" id="CP000142">
    <property type="protein sequence ID" value="ABA89475.1"/>
    <property type="molecule type" value="Genomic_DNA"/>
</dbReference>
<dbReference type="RefSeq" id="WP_011341990.1">
    <property type="nucleotide sequence ID" value="NC_007498.2"/>
</dbReference>
<dbReference type="SMR" id="Q3A2D2"/>
<dbReference type="STRING" id="338963.Pcar_2236"/>
<dbReference type="KEGG" id="pca:Pcar_2236"/>
<dbReference type="eggNOG" id="COG0422">
    <property type="taxonomic scope" value="Bacteria"/>
</dbReference>
<dbReference type="HOGENOM" id="CLU_013181_2_2_7"/>
<dbReference type="OrthoDB" id="9805897at2"/>
<dbReference type="UniPathway" id="UPA00060"/>
<dbReference type="Proteomes" id="UP000002534">
    <property type="component" value="Chromosome"/>
</dbReference>
<dbReference type="GO" id="GO:0005829">
    <property type="term" value="C:cytosol"/>
    <property type="evidence" value="ECO:0007669"/>
    <property type="project" value="TreeGrafter"/>
</dbReference>
<dbReference type="GO" id="GO:0051539">
    <property type="term" value="F:4 iron, 4 sulfur cluster binding"/>
    <property type="evidence" value="ECO:0007669"/>
    <property type="project" value="UniProtKB-KW"/>
</dbReference>
<dbReference type="GO" id="GO:0016830">
    <property type="term" value="F:carbon-carbon lyase activity"/>
    <property type="evidence" value="ECO:0007669"/>
    <property type="project" value="InterPro"/>
</dbReference>
<dbReference type="GO" id="GO:0008270">
    <property type="term" value="F:zinc ion binding"/>
    <property type="evidence" value="ECO:0007669"/>
    <property type="project" value="UniProtKB-UniRule"/>
</dbReference>
<dbReference type="GO" id="GO:0009228">
    <property type="term" value="P:thiamine biosynthetic process"/>
    <property type="evidence" value="ECO:0007669"/>
    <property type="project" value="UniProtKB-KW"/>
</dbReference>
<dbReference type="GO" id="GO:0009229">
    <property type="term" value="P:thiamine diphosphate biosynthetic process"/>
    <property type="evidence" value="ECO:0007669"/>
    <property type="project" value="UniProtKB-UniRule"/>
</dbReference>
<dbReference type="FunFam" id="3.20.20.540:FF:000001">
    <property type="entry name" value="Phosphomethylpyrimidine synthase"/>
    <property type="match status" value="1"/>
</dbReference>
<dbReference type="Gene3D" id="6.10.250.620">
    <property type="match status" value="1"/>
</dbReference>
<dbReference type="Gene3D" id="3.20.20.540">
    <property type="entry name" value="Radical SAM ThiC family, central domain"/>
    <property type="match status" value="1"/>
</dbReference>
<dbReference type="HAMAP" id="MF_00089">
    <property type="entry name" value="ThiC"/>
    <property type="match status" value="1"/>
</dbReference>
<dbReference type="InterPro" id="IPR037509">
    <property type="entry name" value="ThiC"/>
</dbReference>
<dbReference type="InterPro" id="IPR038521">
    <property type="entry name" value="ThiC/Bza_core_dom"/>
</dbReference>
<dbReference type="InterPro" id="IPR002817">
    <property type="entry name" value="ThiC/BzaA/B"/>
</dbReference>
<dbReference type="NCBIfam" id="NF009895">
    <property type="entry name" value="PRK13352.1"/>
    <property type="match status" value="1"/>
</dbReference>
<dbReference type="NCBIfam" id="TIGR00190">
    <property type="entry name" value="thiC"/>
    <property type="match status" value="1"/>
</dbReference>
<dbReference type="PANTHER" id="PTHR30557:SF1">
    <property type="entry name" value="PHOSPHOMETHYLPYRIMIDINE SYNTHASE, CHLOROPLASTIC"/>
    <property type="match status" value="1"/>
</dbReference>
<dbReference type="PANTHER" id="PTHR30557">
    <property type="entry name" value="THIAMINE BIOSYNTHESIS PROTEIN THIC"/>
    <property type="match status" value="1"/>
</dbReference>
<dbReference type="Pfam" id="PF01964">
    <property type="entry name" value="ThiC_Rad_SAM"/>
    <property type="match status" value="1"/>
</dbReference>
<dbReference type="SFLD" id="SFLDF00407">
    <property type="entry name" value="phosphomethylpyrimidine_syntha"/>
    <property type="match status" value="1"/>
</dbReference>
<dbReference type="SFLD" id="SFLDG01114">
    <property type="entry name" value="phosphomethylpyrimidine_syntha"/>
    <property type="match status" value="1"/>
</dbReference>
<dbReference type="SFLD" id="SFLDS00113">
    <property type="entry name" value="Radical_SAM_Phosphomethylpyrim"/>
    <property type="match status" value="1"/>
</dbReference>
<dbReference type="SUPFAM" id="SSF51569">
    <property type="entry name" value="Aldolase"/>
    <property type="match status" value="1"/>
</dbReference>
<accession>Q3A2D2</accession>
<sequence>MTQLEMARQGIVSDKMKQAAADAGIDAEILRQRIAEGTAIVCHNNMHANGRPLAVGKGLPTRVNANIGTSKDDTSIDNELEKARVAVAAGADAIMDLSTGGPIDEIRRAIIAETQACIGSVPLYQAACDTVVKKGKAIVDMTADEIFDGIKKHLDDGVDFITVHCGVTLSTVERMDNEGRIMDVVSRGGSFTVAWMTHNNAENPLYEQYDRLLELVKPYDATLSLGDGFRPGCLADATDRAQIHELIILGELTQRAWDAGIQVMIEGPGHVPLNQIEANIQLQKSLCHGAPFYVLGPLVTDIAPGYDHITCAIGGAVAAGAGADFLCYVTPSEHLCLPNVQDVHDGVMATRIAAHAADIVKGLPGAMEKDIAMSKARKGLDWETQYCLAIDPELARKRRGESGVDEEHGACTMCGEFCAYKVMDERKPKQ</sequence>
<keyword id="KW-0004">4Fe-4S</keyword>
<keyword id="KW-0408">Iron</keyword>
<keyword id="KW-0411">Iron-sulfur</keyword>
<keyword id="KW-0456">Lyase</keyword>
<keyword id="KW-0479">Metal-binding</keyword>
<keyword id="KW-1185">Reference proteome</keyword>
<keyword id="KW-0949">S-adenosyl-L-methionine</keyword>
<keyword id="KW-0784">Thiamine biosynthesis</keyword>
<keyword id="KW-0862">Zinc</keyword>
<organism>
    <name type="scientific">Syntrophotalea carbinolica (strain DSM 2380 / NBRC 103641 / GraBd1)</name>
    <name type="common">Pelobacter carbinolicus</name>
    <dbReference type="NCBI Taxonomy" id="338963"/>
    <lineage>
        <taxon>Bacteria</taxon>
        <taxon>Pseudomonadati</taxon>
        <taxon>Thermodesulfobacteriota</taxon>
        <taxon>Desulfuromonadia</taxon>
        <taxon>Desulfuromonadales</taxon>
        <taxon>Syntrophotaleaceae</taxon>
        <taxon>Syntrophotalea</taxon>
    </lineage>
</organism>
<feature type="chain" id="PRO_0000242282" description="Phosphomethylpyrimidine synthase 2">
    <location>
        <begin position="1"/>
        <end position="430"/>
    </location>
</feature>
<feature type="binding site" evidence="1">
    <location>
        <position position="66"/>
    </location>
    <ligand>
        <name>substrate</name>
    </ligand>
</feature>
<feature type="binding site" evidence="1">
    <location>
        <position position="95"/>
    </location>
    <ligand>
        <name>substrate</name>
    </ligand>
</feature>
<feature type="binding site" evidence="1">
    <location>
        <position position="124"/>
    </location>
    <ligand>
        <name>substrate</name>
    </ligand>
</feature>
<feature type="binding site" evidence="1">
    <location>
        <position position="164"/>
    </location>
    <ligand>
        <name>substrate</name>
    </ligand>
</feature>
<feature type="binding site" evidence="1">
    <location>
        <begin position="186"/>
        <end position="188"/>
    </location>
    <ligand>
        <name>substrate</name>
    </ligand>
</feature>
<feature type="binding site" evidence="1">
    <location>
        <begin position="227"/>
        <end position="230"/>
    </location>
    <ligand>
        <name>substrate</name>
    </ligand>
</feature>
<feature type="binding site" evidence="1">
    <location>
        <position position="266"/>
    </location>
    <ligand>
        <name>substrate</name>
    </ligand>
</feature>
<feature type="binding site" evidence="1">
    <location>
        <position position="270"/>
    </location>
    <ligand>
        <name>Zn(2+)</name>
        <dbReference type="ChEBI" id="CHEBI:29105"/>
    </ligand>
</feature>
<feature type="binding site" evidence="1">
    <location>
        <position position="293"/>
    </location>
    <ligand>
        <name>substrate</name>
    </ligand>
</feature>
<feature type="binding site" evidence="1">
    <location>
        <position position="334"/>
    </location>
    <ligand>
        <name>Zn(2+)</name>
        <dbReference type="ChEBI" id="CHEBI:29105"/>
    </ligand>
</feature>
<feature type="binding site" evidence="1">
    <location>
        <position position="411"/>
    </location>
    <ligand>
        <name>[4Fe-4S] cluster</name>
        <dbReference type="ChEBI" id="CHEBI:49883"/>
        <note>4Fe-4S-S-AdoMet</note>
    </ligand>
</feature>
<feature type="binding site" evidence="1">
    <location>
        <position position="414"/>
    </location>
    <ligand>
        <name>[4Fe-4S] cluster</name>
        <dbReference type="ChEBI" id="CHEBI:49883"/>
        <note>4Fe-4S-S-AdoMet</note>
    </ligand>
</feature>
<feature type="binding site" evidence="1">
    <location>
        <position position="418"/>
    </location>
    <ligand>
        <name>[4Fe-4S] cluster</name>
        <dbReference type="ChEBI" id="CHEBI:49883"/>
        <note>4Fe-4S-S-AdoMet</note>
    </ligand>
</feature>
<gene>
    <name evidence="1" type="primary">thiC2</name>
    <name type="ordered locus">Pcar_2236</name>
</gene>